<comment type="similarity">
    <text evidence="3">Belongs to the class IV-like SAM-binding methyltransferase superfamily. RNA methyltransferase TrmH family.</text>
</comment>
<feature type="chain" id="PRO_0000379576" description="Uncharacterized tRNA/rRNA methyltransferase MAP_0479">
    <location>
        <begin position="1"/>
        <end position="309"/>
    </location>
</feature>
<feature type="region of interest" description="Disordered" evidence="2">
    <location>
        <begin position="1"/>
        <end position="70"/>
    </location>
</feature>
<feature type="compositionally biased region" description="Basic residues" evidence="2">
    <location>
        <begin position="1"/>
        <end position="16"/>
    </location>
</feature>
<feature type="binding site" evidence="1">
    <location>
        <position position="261"/>
    </location>
    <ligand>
        <name>S-adenosyl-L-methionine</name>
        <dbReference type="ChEBI" id="CHEBI:59789"/>
    </ligand>
</feature>
<feature type="binding site" evidence="1">
    <location>
        <position position="281"/>
    </location>
    <ligand>
        <name>S-adenosyl-L-methionine</name>
        <dbReference type="ChEBI" id="CHEBI:59789"/>
    </ligand>
</feature>
<feature type="binding site" evidence="1">
    <location>
        <position position="290"/>
    </location>
    <ligand>
        <name>S-adenosyl-L-methionine</name>
        <dbReference type="ChEBI" id="CHEBI:59789"/>
    </ligand>
</feature>
<protein>
    <recommendedName>
        <fullName>Uncharacterized tRNA/rRNA methyltransferase MAP_0479</fullName>
        <ecNumber>2.1.1.-</ecNumber>
    </recommendedName>
</protein>
<organism>
    <name type="scientific">Mycolicibacterium paratuberculosis (strain ATCC BAA-968 / K-10)</name>
    <name type="common">Mycobacterium paratuberculosis</name>
    <dbReference type="NCBI Taxonomy" id="262316"/>
    <lineage>
        <taxon>Bacteria</taxon>
        <taxon>Bacillati</taxon>
        <taxon>Actinomycetota</taxon>
        <taxon>Actinomycetes</taxon>
        <taxon>Mycobacteriales</taxon>
        <taxon>Mycobacteriaceae</taxon>
        <taxon>Mycobacterium</taxon>
        <taxon>Mycobacterium avium complex (MAC)</taxon>
    </lineage>
</organism>
<sequence>MAGNSRRRGAVRKAGTKKGPTVGSGGQRRRGLEGRGPTPPAHLRPNHPAAKRAQSPPRRPAKRTEETETVLGRNPVLECLRAGVPATALYVALGTEADERLTESVSRAADSGISILEVPRADLDRMTGNHLHQGIALQVPPYIYAHPDDLLEAAAGSLPALLVALDNISDPRNLGAIVRSVAAFGGHGVLIPQRRSASVTAVAWRTSAGAAARIPVARATNLTRTLQDWADRGLRVIGLDAGGDTMLDDLDGSDPLVVVVGSEGKGLSRLVRQNCDEVVSIPMAGSAESLNASVAAGVVLAEISRQRRG</sequence>
<keyword id="KW-0489">Methyltransferase</keyword>
<keyword id="KW-1185">Reference proteome</keyword>
<keyword id="KW-0949">S-adenosyl-L-methionine</keyword>
<keyword id="KW-0808">Transferase</keyword>
<evidence type="ECO:0000250" key="1"/>
<evidence type="ECO:0000256" key="2">
    <source>
        <dbReference type="SAM" id="MobiDB-lite"/>
    </source>
</evidence>
<evidence type="ECO:0000305" key="3"/>
<dbReference type="EC" id="2.1.1.-"/>
<dbReference type="EMBL" id="AE016958">
    <property type="protein sequence ID" value="AAS02796.1"/>
    <property type="molecule type" value="Genomic_DNA"/>
</dbReference>
<dbReference type="SMR" id="Q743W2"/>
<dbReference type="STRING" id="262316.MAP_0479"/>
<dbReference type="KEGG" id="mpa:MAP_0479"/>
<dbReference type="PATRIC" id="fig|262316.17.peg.510"/>
<dbReference type="eggNOG" id="COG0566">
    <property type="taxonomic scope" value="Bacteria"/>
</dbReference>
<dbReference type="HOGENOM" id="CLU_021322_0_0_11"/>
<dbReference type="Proteomes" id="UP000000580">
    <property type="component" value="Chromosome"/>
</dbReference>
<dbReference type="GO" id="GO:0005829">
    <property type="term" value="C:cytosol"/>
    <property type="evidence" value="ECO:0007669"/>
    <property type="project" value="TreeGrafter"/>
</dbReference>
<dbReference type="GO" id="GO:0003723">
    <property type="term" value="F:RNA binding"/>
    <property type="evidence" value="ECO:0007669"/>
    <property type="project" value="InterPro"/>
</dbReference>
<dbReference type="GO" id="GO:0008173">
    <property type="term" value="F:RNA methyltransferase activity"/>
    <property type="evidence" value="ECO:0007669"/>
    <property type="project" value="InterPro"/>
</dbReference>
<dbReference type="GO" id="GO:0032259">
    <property type="term" value="P:methylation"/>
    <property type="evidence" value="ECO:0007669"/>
    <property type="project" value="UniProtKB-KW"/>
</dbReference>
<dbReference type="GO" id="GO:0006396">
    <property type="term" value="P:RNA processing"/>
    <property type="evidence" value="ECO:0007669"/>
    <property type="project" value="InterPro"/>
</dbReference>
<dbReference type="CDD" id="cd18103">
    <property type="entry name" value="SpoU-like_RlmB"/>
    <property type="match status" value="1"/>
</dbReference>
<dbReference type="FunFam" id="3.30.1330.30:FF:000024">
    <property type="entry name" value="Putative tRNA/rRNA methyltransferase"/>
    <property type="match status" value="1"/>
</dbReference>
<dbReference type="FunFam" id="3.40.1280.10:FF:000015">
    <property type="entry name" value="Putative tRNA/rRNA methyltransferase"/>
    <property type="match status" value="1"/>
</dbReference>
<dbReference type="Gene3D" id="3.30.1330.30">
    <property type="match status" value="1"/>
</dbReference>
<dbReference type="Gene3D" id="3.40.1280.10">
    <property type="match status" value="1"/>
</dbReference>
<dbReference type="InterPro" id="IPR029028">
    <property type="entry name" value="Alpha/beta_knot_MTases"/>
</dbReference>
<dbReference type="InterPro" id="IPR029064">
    <property type="entry name" value="Ribosomal_eL30-like_sf"/>
</dbReference>
<dbReference type="InterPro" id="IPR004441">
    <property type="entry name" value="rRNA_MeTrfase_TrmH"/>
</dbReference>
<dbReference type="InterPro" id="IPR001537">
    <property type="entry name" value="SpoU_MeTrfase"/>
</dbReference>
<dbReference type="InterPro" id="IPR013123">
    <property type="entry name" value="SpoU_subst-bd"/>
</dbReference>
<dbReference type="InterPro" id="IPR029026">
    <property type="entry name" value="tRNA_m1G_MTases_N"/>
</dbReference>
<dbReference type="NCBIfam" id="TIGR00186">
    <property type="entry name" value="rRNA_methyl_3"/>
    <property type="match status" value="1"/>
</dbReference>
<dbReference type="PANTHER" id="PTHR46429">
    <property type="entry name" value="23S RRNA (GUANOSINE-2'-O-)-METHYLTRANSFERASE RLMB"/>
    <property type="match status" value="1"/>
</dbReference>
<dbReference type="PANTHER" id="PTHR46429:SF1">
    <property type="entry name" value="23S RRNA (GUANOSINE-2'-O-)-METHYLTRANSFERASE RLMB"/>
    <property type="match status" value="1"/>
</dbReference>
<dbReference type="Pfam" id="PF00588">
    <property type="entry name" value="SpoU_methylase"/>
    <property type="match status" value="1"/>
</dbReference>
<dbReference type="Pfam" id="PF08032">
    <property type="entry name" value="SpoU_sub_bind"/>
    <property type="match status" value="1"/>
</dbReference>
<dbReference type="SMART" id="SM00967">
    <property type="entry name" value="SpoU_sub_bind"/>
    <property type="match status" value="1"/>
</dbReference>
<dbReference type="SUPFAM" id="SSF75217">
    <property type="entry name" value="alpha/beta knot"/>
    <property type="match status" value="1"/>
</dbReference>
<dbReference type="SUPFAM" id="SSF55315">
    <property type="entry name" value="L30e-like"/>
    <property type="match status" value="1"/>
</dbReference>
<proteinExistence type="inferred from homology"/>
<gene>
    <name type="ordered locus">MAP_0479</name>
</gene>
<reference key="1">
    <citation type="journal article" date="2005" name="Proc. Natl. Acad. Sci. U.S.A.">
        <title>The complete genome sequence of Mycobacterium avium subspecies paratuberculosis.</title>
        <authorList>
            <person name="Li L."/>
            <person name="Bannantine J.P."/>
            <person name="Zhang Q."/>
            <person name="Amonsin A."/>
            <person name="May B.J."/>
            <person name="Alt D."/>
            <person name="Banerji N."/>
            <person name="Kanjilal S."/>
            <person name="Kapur V."/>
        </authorList>
    </citation>
    <scope>NUCLEOTIDE SEQUENCE [LARGE SCALE GENOMIC DNA]</scope>
    <source>
        <strain>ATCC BAA-968 / K-10</strain>
    </source>
</reference>
<name>Y479_MYCPA</name>
<accession>Q743W2</accession>